<organism>
    <name type="scientific">Methanothermobacter thermautotrophicus (strain ATCC 29096 / DSM 1053 / JCM 10044 / NBRC 100330 / Delta H)</name>
    <name type="common">Methanobacterium thermoautotrophicum</name>
    <dbReference type="NCBI Taxonomy" id="187420"/>
    <lineage>
        <taxon>Archaea</taxon>
        <taxon>Methanobacteriati</taxon>
        <taxon>Methanobacteriota</taxon>
        <taxon>Methanomada group</taxon>
        <taxon>Methanobacteria</taxon>
        <taxon>Methanobacteriales</taxon>
        <taxon>Methanobacteriaceae</taxon>
        <taxon>Methanothermobacter</taxon>
    </lineage>
</organism>
<gene>
    <name type="primary">metX</name>
    <name type="ordered locus">MTH_1820</name>
</gene>
<reference key="1">
    <citation type="journal article" date="1997" name="J. Bacteriol.">
        <title>Complete genome sequence of Methanobacterium thermoautotrophicum deltaH: functional analysis and comparative genomics.</title>
        <authorList>
            <person name="Smith D.R."/>
            <person name="Doucette-Stamm L.A."/>
            <person name="Deloughery C."/>
            <person name="Lee H.-M."/>
            <person name="Dubois J."/>
            <person name="Aldredge T."/>
            <person name="Bashirzadeh R."/>
            <person name="Blakely D."/>
            <person name="Cook R."/>
            <person name="Gilbert K."/>
            <person name="Harrison D."/>
            <person name="Hoang L."/>
            <person name="Keagle P."/>
            <person name="Lumm W."/>
            <person name="Pothier B."/>
            <person name="Qiu D."/>
            <person name="Spadafora R."/>
            <person name="Vicare R."/>
            <person name="Wang Y."/>
            <person name="Wierzbowski J."/>
            <person name="Gibson R."/>
            <person name="Jiwani N."/>
            <person name="Caruso A."/>
            <person name="Bush D."/>
            <person name="Safer H."/>
            <person name="Patwell D."/>
            <person name="Prabhakar S."/>
            <person name="McDougall S."/>
            <person name="Shimer G."/>
            <person name="Goyal A."/>
            <person name="Pietrovski S."/>
            <person name="Church G.M."/>
            <person name="Daniels C.J."/>
            <person name="Mao J.-I."/>
            <person name="Rice P."/>
            <person name="Noelling J."/>
            <person name="Reeve J.N."/>
        </authorList>
    </citation>
    <scope>NUCLEOTIDE SEQUENCE [LARGE SCALE GENOMIC DNA]</scope>
    <source>
        <strain>ATCC 29096 / DSM 1053 / JCM 10044 / NBRC 100330 / Delta H</strain>
    </source>
</reference>
<feature type="chain" id="PRO_0000155753" description="Probable acyltransferase">
    <location>
        <begin position="1"/>
        <end position="319"/>
    </location>
</feature>
<feature type="domain" description="AB hydrolase-1" evidence="2">
    <location>
        <begin position="46"/>
        <end position="301"/>
    </location>
</feature>
<feature type="active site" evidence="2">
    <location>
        <position position="269"/>
    </location>
</feature>
<name>METX_METTH</name>
<keyword id="KW-0012">Acyltransferase</keyword>
<keyword id="KW-0963">Cytoplasm</keyword>
<keyword id="KW-1185">Reference proteome</keyword>
<keyword id="KW-0808">Transferase</keyword>
<protein>
    <recommendedName>
        <fullName evidence="3">Probable acyltransferase</fullName>
        <ecNumber evidence="3">2.3.1.-</ecNumber>
    </recommendedName>
</protein>
<sequence length="319" mass="35688">MMEEIPASYFKIEEFQFESGEKIQEAPVEYRTTGKPSLDDMGVIDNAVIYIHGWSGDCSSVRRIAALTEPGGALENFFVISISSLGSPGSASPSTTAMGKDFPEYTILDMVNFQRQFLDEKFGIRKVRGVIGTSMGGFQALQWAAEYPDEMEFLIPLVTSWQVRGINYALFSYMNHLIEGDPEFRAGTRPERALSLASMLMYLHGLSREYYQGLENAELESSMMDMGSEGALMDPYDVIWRNRAAMKHDLSGKLESIRARTLIFGVNQDRYFPPELDTIPMAQLIPKAELVLFDSECGHLGVNEIGKYNEIIVSFIGGD</sequence>
<dbReference type="EC" id="2.3.1.-" evidence="3"/>
<dbReference type="EMBL" id="AE000666">
    <property type="protein sequence ID" value="AAB86286.1"/>
    <property type="molecule type" value="Genomic_DNA"/>
</dbReference>
<dbReference type="PIR" id="D69110">
    <property type="entry name" value="D69110"/>
</dbReference>
<dbReference type="SMR" id="O27848"/>
<dbReference type="STRING" id="187420.MTH_1820"/>
<dbReference type="ESTHER" id="metth-metx">
    <property type="family name" value="Homoserine_transacetylase"/>
</dbReference>
<dbReference type="PaxDb" id="187420-MTH_1820"/>
<dbReference type="EnsemblBacteria" id="AAB86286">
    <property type="protein sequence ID" value="AAB86286"/>
    <property type="gene ID" value="MTH_1820"/>
</dbReference>
<dbReference type="KEGG" id="mth:MTH_1820"/>
<dbReference type="PATRIC" id="fig|187420.15.peg.1774"/>
<dbReference type="HOGENOM" id="CLU_028760_2_0_2"/>
<dbReference type="InParanoid" id="O27848"/>
<dbReference type="Proteomes" id="UP000005223">
    <property type="component" value="Chromosome"/>
</dbReference>
<dbReference type="GO" id="GO:0005737">
    <property type="term" value="C:cytoplasm"/>
    <property type="evidence" value="ECO:0007669"/>
    <property type="project" value="UniProtKB-SubCell"/>
</dbReference>
<dbReference type="GO" id="GO:0004414">
    <property type="term" value="F:homoserine O-acetyltransferase activity"/>
    <property type="evidence" value="ECO:0007669"/>
    <property type="project" value="TreeGrafter"/>
</dbReference>
<dbReference type="GO" id="GO:0009092">
    <property type="term" value="P:homoserine metabolic process"/>
    <property type="evidence" value="ECO:0007669"/>
    <property type="project" value="TreeGrafter"/>
</dbReference>
<dbReference type="GO" id="GO:0009086">
    <property type="term" value="P:methionine biosynthetic process"/>
    <property type="evidence" value="ECO:0007669"/>
    <property type="project" value="TreeGrafter"/>
</dbReference>
<dbReference type="Gene3D" id="3.40.50.1820">
    <property type="entry name" value="alpha/beta hydrolase"/>
    <property type="match status" value="1"/>
</dbReference>
<dbReference type="InterPro" id="IPR000073">
    <property type="entry name" value="AB_hydrolase_1"/>
</dbReference>
<dbReference type="InterPro" id="IPR029058">
    <property type="entry name" value="AB_hydrolase_fold"/>
</dbReference>
<dbReference type="InterPro" id="IPR008220">
    <property type="entry name" value="HAT_MetX-like"/>
</dbReference>
<dbReference type="PANTHER" id="PTHR32268">
    <property type="entry name" value="HOMOSERINE O-ACETYLTRANSFERASE"/>
    <property type="match status" value="1"/>
</dbReference>
<dbReference type="PANTHER" id="PTHR32268:SF11">
    <property type="entry name" value="HOMOSERINE O-ACETYLTRANSFERASE"/>
    <property type="match status" value="1"/>
</dbReference>
<dbReference type="Pfam" id="PF00561">
    <property type="entry name" value="Abhydrolase_1"/>
    <property type="match status" value="1"/>
</dbReference>
<dbReference type="PIRSF" id="PIRSF000443">
    <property type="entry name" value="Homoser_Ac_trans"/>
    <property type="match status" value="1"/>
</dbReference>
<dbReference type="SUPFAM" id="SSF53474">
    <property type="entry name" value="alpha/beta-Hydrolases"/>
    <property type="match status" value="1"/>
</dbReference>
<evidence type="ECO:0000250" key="1"/>
<evidence type="ECO:0000255" key="2"/>
<evidence type="ECO:0000305" key="3"/>
<accession>O27848</accession>
<comment type="subunit">
    <text evidence="1">Homodimer.</text>
</comment>
<comment type="subcellular location">
    <subcellularLocation>
        <location evidence="1">Cytoplasm</location>
    </subcellularLocation>
</comment>
<comment type="similarity">
    <text evidence="3">Belongs to the AB hydrolase superfamily. MetX family.</text>
</comment>
<proteinExistence type="inferred from homology"/>